<sequence length="573" mass="61789">MEPAEDSLGATIQPPELVRVPRGRSLRILLGLRGALSPDVRREAAALVALAGPVFLAQLMIFLISIVSSIFCGHLGKVELDAVTLAVSVVNVTGISVGTGLASACDTLMSQSFGGKNLKRVGVILQRGILILLLCCFPCWAIFLNTERLLLLLRQDPDVARLAQVYVMICIPALPAAFLFQLQTRYLQSQGIIMPQVIVGIAANVVNVGMNAFLLYALDLGVVGSAWANTTSQFFLSALLFLYVWWKRIHIHTWGGWTRECFQEWSSYTRLAIPSMFMVCIEWWTFEIGTFLAGLVNVTELGAQAVIYELASVAYMVPFGFGVAASVRVGNALGAGNADQARCSCTTVLLCAGVCALLVGILLAALKDVVAYIFTNDKDIISLVSQVMPIFAPFHLFDALAGTCGGVLRGTGKQKIGAVLNTIGYYGFGFPIGVSLMFAAKLGIIGLWAGLIVCVSFQAFSYLIYILRTNWSRVAEQAQVRAGLKSTKELIPTPADLPILEREVMDGVILPDIIRPESQTGQLVVEENSQCAVPTVGEVLTGRQLVFYRGMALTVSVAVLIAGIVVRVFNDRG</sequence>
<proteinExistence type="evidence at protein level"/>
<comment type="function">
    <text evidence="2 3">Multidrug efflux pump that functions as a H(+)/organic cation antiporter (PubMed:17715386). May mediate testosterone efflux from the Leydig cells in the testes (PubMed:17715386).</text>
</comment>
<comment type="biophysicochemical properties">
    <kinetics>
        <KM evidence="2">0.71 mM for TEA</KM>
        <Vmax evidence="2">0.004 nmol/min/mg enzyme toward TEA</Vmax>
    </kinetics>
    <phDependence>
        <text evidence="2">Optimum pH is 8.5. Active from pH 6 to 8.5.</text>
    </phDependence>
</comment>
<comment type="subcellular location">
    <subcellularLocation>
        <location evidence="2">Cell membrane</location>
        <topology evidence="1">Multi-pass membrane protein</topology>
    </subcellularLocation>
</comment>
<comment type="tissue specificity">
    <text evidence="2">Expressed in testis; especially in testicular Leydig cells.</text>
</comment>
<comment type="similarity">
    <text evidence="4">Belongs to the multi antimicrobial extrusion (MATE) (TC 2.A.66.1) family.</text>
</comment>
<comment type="caution">
    <text evidence="5">Human SLC47A2/MATE2 and rodent SLC47A2/MATE2 exhibit only low mutual sequence identity (38.1%) and different expression patterns. In fact, the counterparts of human SLC47A2/MATE2 have not been identified in rats and mice, and the counterpart of rodent SLC47A2/MATE2 has not been found in humans. The phylogenetic tree of mammalian MATE-type transporters clearly suggested that rodent SLC47A2/MATE2 would be classified into an new subgroup:SLC47A3/MATE3 family but not SLC47A2/MATE2 family. As the nomenclature and classification are confusing, PubMed:17715386 suggested to rename mouse and rat SLC47A2/MATE2 to SLC47A3/MATE3.</text>
</comment>
<comment type="sequence caution" evidence="4">
    <conflict type="erroneous gene model prediction">
        <sequence resource="EMBL-CDS" id="CAI25733"/>
    </conflict>
</comment>
<organism>
    <name type="scientific">Mus musculus</name>
    <name type="common">Mouse</name>
    <dbReference type="NCBI Taxonomy" id="10090"/>
    <lineage>
        <taxon>Eukaryota</taxon>
        <taxon>Metazoa</taxon>
        <taxon>Chordata</taxon>
        <taxon>Craniata</taxon>
        <taxon>Vertebrata</taxon>
        <taxon>Euteleostomi</taxon>
        <taxon>Mammalia</taxon>
        <taxon>Eutheria</taxon>
        <taxon>Euarchontoglires</taxon>
        <taxon>Glires</taxon>
        <taxon>Rodentia</taxon>
        <taxon>Myomorpha</taxon>
        <taxon>Muroidea</taxon>
        <taxon>Muridae</taxon>
        <taxon>Murinae</taxon>
        <taxon>Mus</taxon>
        <taxon>Mus</taxon>
    </lineage>
</organism>
<accession>Q3V050</accession>
<accession>B2RXN1</accession>
<accession>Q5SS46</accession>
<keyword id="KW-0050">Antiport</keyword>
<keyword id="KW-1003">Cell membrane</keyword>
<keyword id="KW-0472">Membrane</keyword>
<keyword id="KW-1185">Reference proteome</keyword>
<keyword id="KW-0812">Transmembrane</keyword>
<keyword id="KW-1133">Transmembrane helix</keyword>
<keyword id="KW-0813">Transport</keyword>
<gene>
    <name type="primary">Slc47a2</name>
    <name type="synonym">Mate2</name>
</gene>
<protein>
    <recommendedName>
        <fullName>Multidrug and toxin extrusion protein 2</fullName>
        <shortName>MATE-2</shortName>
        <shortName>mMATE-2</shortName>
    </recommendedName>
    <alternativeName>
        <fullName>H(+)/organic cation antiporter kidney-specific</fullName>
    </alternativeName>
    <alternativeName>
        <fullName>Solute carrier family 47 member 2</fullName>
    </alternativeName>
</protein>
<dbReference type="EMBL" id="AK133432">
    <property type="protein sequence ID" value="BAE21655.1"/>
    <property type="molecule type" value="mRNA"/>
</dbReference>
<dbReference type="EMBL" id="AL669884">
    <property type="protein sequence ID" value="CAI25733.1"/>
    <property type="status" value="ALT_SEQ"/>
    <property type="molecule type" value="Genomic_DNA"/>
</dbReference>
<dbReference type="EMBL" id="BC147619">
    <property type="protein sequence ID" value="AAI47620.1"/>
    <property type="molecule type" value="mRNA"/>
</dbReference>
<dbReference type="EMBL" id="BC157913">
    <property type="protein sequence ID" value="AAI57914.1"/>
    <property type="molecule type" value="mRNA"/>
</dbReference>
<dbReference type="CCDS" id="CCDS24810.1"/>
<dbReference type="RefSeq" id="NP_001028714.1">
    <property type="nucleotide sequence ID" value="NM_001033542.2"/>
</dbReference>
<dbReference type="SMR" id="Q3V050"/>
<dbReference type="FunCoup" id="Q3V050">
    <property type="interactions" value="117"/>
</dbReference>
<dbReference type="STRING" id="10090.ENSMUSP00000090710"/>
<dbReference type="DrugCentral" id="Q3V050"/>
<dbReference type="GuidetoPHARMACOLOGY" id="1217"/>
<dbReference type="TCDB" id="2.A.66.1.16">
    <property type="family name" value="the multidrug/oligosaccharidyl-lipid/polysaccharide (mop) flippase superfamily"/>
</dbReference>
<dbReference type="SwissPalm" id="Q3V050"/>
<dbReference type="jPOST" id="Q3V050"/>
<dbReference type="PaxDb" id="10090-ENSMUSP00000090710"/>
<dbReference type="ProteomicsDB" id="260796"/>
<dbReference type="Ensembl" id="ENSMUST00000093029.9">
    <property type="protein sequence ID" value="ENSMUSP00000090710.3"/>
    <property type="gene ID" value="ENSMUSG00000069855.10"/>
</dbReference>
<dbReference type="GeneID" id="380701"/>
<dbReference type="KEGG" id="mmu:380701"/>
<dbReference type="UCSC" id="uc007jhg.1">
    <property type="organism name" value="mouse"/>
</dbReference>
<dbReference type="AGR" id="MGI:3588190"/>
<dbReference type="CTD" id="146802"/>
<dbReference type="MGI" id="MGI:3588190">
    <property type="gene designation" value="Slc47a2"/>
</dbReference>
<dbReference type="VEuPathDB" id="HostDB:ENSMUSG00000069855"/>
<dbReference type="eggNOG" id="KOG1347">
    <property type="taxonomic scope" value="Eukaryota"/>
</dbReference>
<dbReference type="GeneTree" id="ENSGT00940000163327"/>
<dbReference type="InParanoid" id="Q3V050"/>
<dbReference type="OMA" id="KISHHHI"/>
<dbReference type="OrthoDB" id="2126698at2759"/>
<dbReference type="PhylomeDB" id="Q3V050"/>
<dbReference type="TreeFam" id="TF324441"/>
<dbReference type="BioGRID-ORCS" id="380701">
    <property type="hits" value="2 hits in 75 CRISPR screens"/>
</dbReference>
<dbReference type="ChiTaRS" id="Slc47a2">
    <property type="organism name" value="mouse"/>
</dbReference>
<dbReference type="PRO" id="PR:Q3V050"/>
<dbReference type="Proteomes" id="UP000000589">
    <property type="component" value="Chromosome 11"/>
</dbReference>
<dbReference type="RNAct" id="Q3V050">
    <property type="molecule type" value="protein"/>
</dbReference>
<dbReference type="Bgee" id="ENSMUSG00000069855">
    <property type="expression patterns" value="Expressed in spermatocyte and 22 other cell types or tissues"/>
</dbReference>
<dbReference type="ExpressionAtlas" id="Q3V050">
    <property type="expression patterns" value="baseline and differential"/>
</dbReference>
<dbReference type="GO" id="GO:0005886">
    <property type="term" value="C:plasma membrane"/>
    <property type="evidence" value="ECO:0000314"/>
    <property type="project" value="UniProtKB"/>
</dbReference>
<dbReference type="GO" id="GO:0015101">
    <property type="term" value="F:organic cation transmembrane transporter activity"/>
    <property type="evidence" value="ECO:0000314"/>
    <property type="project" value="UniProtKB"/>
</dbReference>
<dbReference type="GO" id="GO:0140968">
    <property type="term" value="F:polyspecific organic cation:proton antiporter activity"/>
    <property type="evidence" value="ECO:0000314"/>
    <property type="project" value="UniProtKB"/>
</dbReference>
<dbReference type="GO" id="GO:0042910">
    <property type="term" value="F:xenobiotic transmembrane transporter activity"/>
    <property type="evidence" value="ECO:0007669"/>
    <property type="project" value="InterPro"/>
</dbReference>
<dbReference type="GO" id="GO:0015695">
    <property type="term" value="P:organic cation transport"/>
    <property type="evidence" value="ECO:0000314"/>
    <property type="project" value="UniProtKB"/>
</dbReference>
<dbReference type="GO" id="GO:1990961">
    <property type="term" value="P:xenobiotic detoxification by transmembrane export across the plasma membrane"/>
    <property type="evidence" value="ECO:0007669"/>
    <property type="project" value="InterPro"/>
</dbReference>
<dbReference type="CDD" id="cd13132">
    <property type="entry name" value="MATE_eukaryotic"/>
    <property type="match status" value="1"/>
</dbReference>
<dbReference type="InterPro" id="IPR045069">
    <property type="entry name" value="MATE_euk"/>
</dbReference>
<dbReference type="InterPro" id="IPR002528">
    <property type="entry name" value="MATE_fam"/>
</dbReference>
<dbReference type="NCBIfam" id="TIGR00797">
    <property type="entry name" value="matE"/>
    <property type="match status" value="1"/>
</dbReference>
<dbReference type="PANTHER" id="PTHR11206">
    <property type="entry name" value="MULTIDRUG RESISTANCE PROTEIN"/>
    <property type="match status" value="1"/>
</dbReference>
<dbReference type="Pfam" id="PF01554">
    <property type="entry name" value="MatE"/>
    <property type="match status" value="2"/>
</dbReference>
<feature type="chain" id="PRO_0000312852" description="Multidrug and toxin extrusion protein 2">
    <location>
        <begin position="1"/>
        <end position="573"/>
    </location>
</feature>
<feature type="topological domain" description="Cytoplasmic" evidence="1">
    <location>
        <begin position="1"/>
        <end position="46"/>
    </location>
</feature>
<feature type="transmembrane region" description="Helical" evidence="1">
    <location>
        <begin position="47"/>
        <end position="67"/>
    </location>
</feature>
<feature type="topological domain" description="Extracellular" evidence="1">
    <location>
        <begin position="68"/>
        <end position="81"/>
    </location>
</feature>
<feature type="transmembrane region" description="Helical" evidence="1">
    <location>
        <begin position="82"/>
        <end position="102"/>
    </location>
</feature>
<feature type="topological domain" description="Cytoplasmic" evidence="1">
    <location>
        <begin position="103"/>
        <end position="122"/>
    </location>
</feature>
<feature type="transmembrane region" description="Helical" evidence="1">
    <location>
        <begin position="123"/>
        <end position="143"/>
    </location>
</feature>
<feature type="topological domain" description="Extracellular" evidence="1">
    <location>
        <begin position="144"/>
        <end position="161"/>
    </location>
</feature>
<feature type="transmembrane region" description="Helical" evidence="1">
    <location>
        <begin position="162"/>
        <end position="182"/>
    </location>
</feature>
<feature type="topological domain" description="Cytoplasmic" evidence="1">
    <location>
        <begin position="183"/>
        <end position="196"/>
    </location>
</feature>
<feature type="transmembrane region" description="Helical" evidence="1">
    <location>
        <begin position="197"/>
        <end position="217"/>
    </location>
</feature>
<feature type="topological domain" description="Extracellular" evidence="1">
    <location>
        <begin position="218"/>
        <end position="225"/>
    </location>
</feature>
<feature type="transmembrane region" description="Helical" evidence="1">
    <location>
        <begin position="226"/>
        <end position="246"/>
    </location>
</feature>
<feature type="topological domain" description="Cytoplasmic" evidence="1">
    <location>
        <begin position="247"/>
        <end position="266"/>
    </location>
</feature>
<feature type="transmembrane region" description="Helical" evidence="1">
    <location>
        <begin position="267"/>
        <end position="286"/>
    </location>
</feature>
<feature type="topological domain" description="Extracellular" evidence="1">
    <location>
        <begin position="287"/>
        <end position="304"/>
    </location>
</feature>
<feature type="transmembrane region" description="Helical" evidence="1">
    <location>
        <begin position="305"/>
        <end position="325"/>
    </location>
</feature>
<feature type="topological domain" description="Cytoplasmic" evidence="1">
    <location>
        <begin position="326"/>
        <end position="345"/>
    </location>
</feature>
<feature type="transmembrane region" description="Helical" evidence="1">
    <location>
        <begin position="346"/>
        <end position="366"/>
    </location>
</feature>
<feature type="topological domain" description="Extracellular" evidence="1">
    <location>
        <begin position="367"/>
        <end position="379"/>
    </location>
</feature>
<feature type="transmembrane region" description="Helical" evidence="1">
    <location>
        <begin position="380"/>
        <end position="400"/>
    </location>
</feature>
<feature type="topological domain" description="Cytoplasmic" evidence="1">
    <location>
        <begin position="401"/>
        <end position="415"/>
    </location>
</feature>
<feature type="transmembrane region" description="Helical" evidence="1">
    <location>
        <begin position="416"/>
        <end position="436"/>
    </location>
</feature>
<feature type="topological domain" description="Extracellular" evidence="1">
    <location>
        <begin position="437"/>
        <end position="443"/>
    </location>
</feature>
<feature type="transmembrane region" description="Helical" evidence="1">
    <location>
        <begin position="444"/>
        <end position="464"/>
    </location>
</feature>
<feature type="topological domain" description="Cytoplasmic" evidence="1">
    <location>
        <begin position="465"/>
        <end position="545"/>
    </location>
</feature>
<feature type="transmembrane region" description="Helical" evidence="1">
    <location>
        <begin position="546"/>
        <end position="566"/>
    </location>
</feature>
<feature type="topological domain" description="Extracellular" evidence="1">
    <location>
        <begin position="567"/>
        <end position="573"/>
    </location>
</feature>
<reference key="1">
    <citation type="journal article" date="2007" name="Am. J. Physiol.">
        <title>Functional characterization of testis-specific rodent multidrug and toxic compound extrusion 2, a class III MATE-type polyspecific H+/organic cation exporter.</title>
        <authorList>
            <person name="Hiasa M."/>
            <person name="Matsumoto T."/>
            <person name="Komatsu T."/>
            <person name="Omote H."/>
            <person name="Moriyama Y."/>
        </authorList>
    </citation>
    <scope>NUCLEOTIDE SEQUENCE [MRNA]</scope>
    <scope>FUNCTION</scope>
    <scope>TRANSPORTER ACTIVITY</scope>
    <scope>BIOPHYSICOCHEMICAL PROPERTIES</scope>
    <scope>SUBCELLULAR LOCATION</scope>
    <scope>TISSUE SPECIFICITY</scope>
    <source>
        <tissue>Testis</tissue>
    </source>
</reference>
<reference key="2">
    <citation type="journal article" date="2005" name="Science">
        <title>The transcriptional landscape of the mammalian genome.</title>
        <authorList>
            <person name="Carninci P."/>
            <person name="Kasukawa T."/>
            <person name="Katayama S."/>
            <person name="Gough J."/>
            <person name="Frith M.C."/>
            <person name="Maeda N."/>
            <person name="Oyama R."/>
            <person name="Ravasi T."/>
            <person name="Lenhard B."/>
            <person name="Wells C."/>
            <person name="Kodzius R."/>
            <person name="Shimokawa K."/>
            <person name="Bajic V.B."/>
            <person name="Brenner S.E."/>
            <person name="Batalov S."/>
            <person name="Forrest A.R."/>
            <person name="Zavolan M."/>
            <person name="Davis M.J."/>
            <person name="Wilming L.G."/>
            <person name="Aidinis V."/>
            <person name="Allen J.E."/>
            <person name="Ambesi-Impiombato A."/>
            <person name="Apweiler R."/>
            <person name="Aturaliya R.N."/>
            <person name="Bailey T.L."/>
            <person name="Bansal M."/>
            <person name="Baxter L."/>
            <person name="Beisel K.W."/>
            <person name="Bersano T."/>
            <person name="Bono H."/>
            <person name="Chalk A.M."/>
            <person name="Chiu K.P."/>
            <person name="Choudhary V."/>
            <person name="Christoffels A."/>
            <person name="Clutterbuck D.R."/>
            <person name="Crowe M.L."/>
            <person name="Dalla E."/>
            <person name="Dalrymple B.P."/>
            <person name="de Bono B."/>
            <person name="Della Gatta G."/>
            <person name="di Bernardo D."/>
            <person name="Down T."/>
            <person name="Engstrom P."/>
            <person name="Fagiolini M."/>
            <person name="Faulkner G."/>
            <person name="Fletcher C.F."/>
            <person name="Fukushima T."/>
            <person name="Furuno M."/>
            <person name="Futaki S."/>
            <person name="Gariboldi M."/>
            <person name="Georgii-Hemming P."/>
            <person name="Gingeras T.R."/>
            <person name="Gojobori T."/>
            <person name="Green R.E."/>
            <person name="Gustincich S."/>
            <person name="Harbers M."/>
            <person name="Hayashi Y."/>
            <person name="Hensch T.K."/>
            <person name="Hirokawa N."/>
            <person name="Hill D."/>
            <person name="Huminiecki L."/>
            <person name="Iacono M."/>
            <person name="Ikeo K."/>
            <person name="Iwama A."/>
            <person name="Ishikawa T."/>
            <person name="Jakt M."/>
            <person name="Kanapin A."/>
            <person name="Katoh M."/>
            <person name="Kawasawa Y."/>
            <person name="Kelso J."/>
            <person name="Kitamura H."/>
            <person name="Kitano H."/>
            <person name="Kollias G."/>
            <person name="Krishnan S.P."/>
            <person name="Kruger A."/>
            <person name="Kummerfeld S.K."/>
            <person name="Kurochkin I.V."/>
            <person name="Lareau L.F."/>
            <person name="Lazarevic D."/>
            <person name="Lipovich L."/>
            <person name="Liu J."/>
            <person name="Liuni S."/>
            <person name="McWilliam S."/>
            <person name="Madan Babu M."/>
            <person name="Madera M."/>
            <person name="Marchionni L."/>
            <person name="Matsuda H."/>
            <person name="Matsuzawa S."/>
            <person name="Miki H."/>
            <person name="Mignone F."/>
            <person name="Miyake S."/>
            <person name="Morris K."/>
            <person name="Mottagui-Tabar S."/>
            <person name="Mulder N."/>
            <person name="Nakano N."/>
            <person name="Nakauchi H."/>
            <person name="Ng P."/>
            <person name="Nilsson R."/>
            <person name="Nishiguchi S."/>
            <person name="Nishikawa S."/>
            <person name="Nori F."/>
            <person name="Ohara O."/>
            <person name="Okazaki Y."/>
            <person name="Orlando V."/>
            <person name="Pang K.C."/>
            <person name="Pavan W.J."/>
            <person name="Pavesi G."/>
            <person name="Pesole G."/>
            <person name="Petrovsky N."/>
            <person name="Piazza S."/>
            <person name="Reed J."/>
            <person name="Reid J.F."/>
            <person name="Ring B.Z."/>
            <person name="Ringwald M."/>
            <person name="Rost B."/>
            <person name="Ruan Y."/>
            <person name="Salzberg S.L."/>
            <person name="Sandelin A."/>
            <person name="Schneider C."/>
            <person name="Schoenbach C."/>
            <person name="Sekiguchi K."/>
            <person name="Semple C.A."/>
            <person name="Seno S."/>
            <person name="Sessa L."/>
            <person name="Sheng Y."/>
            <person name="Shibata Y."/>
            <person name="Shimada H."/>
            <person name="Shimada K."/>
            <person name="Silva D."/>
            <person name="Sinclair B."/>
            <person name="Sperling S."/>
            <person name="Stupka E."/>
            <person name="Sugiura K."/>
            <person name="Sultana R."/>
            <person name="Takenaka Y."/>
            <person name="Taki K."/>
            <person name="Tammoja K."/>
            <person name="Tan S.L."/>
            <person name="Tang S."/>
            <person name="Taylor M.S."/>
            <person name="Tegner J."/>
            <person name="Teichmann S.A."/>
            <person name="Ueda H.R."/>
            <person name="van Nimwegen E."/>
            <person name="Verardo R."/>
            <person name="Wei C.L."/>
            <person name="Yagi K."/>
            <person name="Yamanishi H."/>
            <person name="Zabarovsky E."/>
            <person name="Zhu S."/>
            <person name="Zimmer A."/>
            <person name="Hide W."/>
            <person name="Bult C."/>
            <person name="Grimmond S.M."/>
            <person name="Teasdale R.D."/>
            <person name="Liu E.T."/>
            <person name="Brusic V."/>
            <person name="Quackenbush J."/>
            <person name="Wahlestedt C."/>
            <person name="Mattick J.S."/>
            <person name="Hume D.A."/>
            <person name="Kai C."/>
            <person name="Sasaki D."/>
            <person name="Tomaru Y."/>
            <person name="Fukuda S."/>
            <person name="Kanamori-Katayama M."/>
            <person name="Suzuki M."/>
            <person name="Aoki J."/>
            <person name="Arakawa T."/>
            <person name="Iida J."/>
            <person name="Imamura K."/>
            <person name="Itoh M."/>
            <person name="Kato T."/>
            <person name="Kawaji H."/>
            <person name="Kawagashira N."/>
            <person name="Kawashima T."/>
            <person name="Kojima M."/>
            <person name="Kondo S."/>
            <person name="Konno H."/>
            <person name="Nakano K."/>
            <person name="Ninomiya N."/>
            <person name="Nishio T."/>
            <person name="Okada M."/>
            <person name="Plessy C."/>
            <person name="Shibata K."/>
            <person name="Shiraki T."/>
            <person name="Suzuki S."/>
            <person name="Tagami M."/>
            <person name="Waki K."/>
            <person name="Watahiki A."/>
            <person name="Okamura-Oho Y."/>
            <person name="Suzuki H."/>
            <person name="Kawai J."/>
            <person name="Hayashizaki Y."/>
        </authorList>
    </citation>
    <scope>NUCLEOTIDE SEQUENCE [LARGE SCALE MRNA]</scope>
    <source>
        <strain>C57BL/6J</strain>
        <tissue>Testis</tissue>
    </source>
</reference>
<reference key="3">
    <citation type="journal article" date="2009" name="PLoS Biol.">
        <title>Lineage-specific biology revealed by a finished genome assembly of the mouse.</title>
        <authorList>
            <person name="Church D.M."/>
            <person name="Goodstadt L."/>
            <person name="Hillier L.W."/>
            <person name="Zody M.C."/>
            <person name="Goldstein S."/>
            <person name="She X."/>
            <person name="Bult C.J."/>
            <person name="Agarwala R."/>
            <person name="Cherry J.L."/>
            <person name="DiCuccio M."/>
            <person name="Hlavina W."/>
            <person name="Kapustin Y."/>
            <person name="Meric P."/>
            <person name="Maglott D."/>
            <person name="Birtle Z."/>
            <person name="Marques A.C."/>
            <person name="Graves T."/>
            <person name="Zhou S."/>
            <person name="Teague B."/>
            <person name="Potamousis K."/>
            <person name="Churas C."/>
            <person name="Place M."/>
            <person name="Herschleb J."/>
            <person name="Runnheim R."/>
            <person name="Forrest D."/>
            <person name="Amos-Landgraf J."/>
            <person name="Schwartz D.C."/>
            <person name="Cheng Z."/>
            <person name="Lindblad-Toh K."/>
            <person name="Eichler E.E."/>
            <person name="Ponting C.P."/>
        </authorList>
    </citation>
    <scope>NUCLEOTIDE SEQUENCE [LARGE SCALE GENOMIC DNA]</scope>
    <source>
        <strain>C57BL/6J</strain>
    </source>
</reference>
<reference key="4">
    <citation type="journal article" date="2004" name="Genome Res.">
        <title>The status, quality, and expansion of the NIH full-length cDNA project: the Mammalian Gene Collection (MGC).</title>
        <authorList>
            <consortium name="The MGC Project Team"/>
        </authorList>
    </citation>
    <scope>NUCLEOTIDE SEQUENCE [LARGE SCALE MRNA]</scope>
    <source>
        <tissue>Testis</tissue>
    </source>
</reference>
<name>S47A2_MOUSE</name>
<evidence type="ECO:0000255" key="1"/>
<evidence type="ECO:0000269" key="2">
    <source>
    </source>
</evidence>
<evidence type="ECO:0000303" key="3">
    <source>
    </source>
</evidence>
<evidence type="ECO:0000305" key="4"/>
<evidence type="ECO:0000305" key="5">
    <source>
    </source>
</evidence>